<name>GUB_NIACI</name>
<accession>P19254</accession>
<feature type="signal peptide" evidence="2">
    <location>
        <begin position="1"/>
        <end position="31"/>
    </location>
</feature>
<feature type="chain" id="PRO_0000007929" description="Beta-glucanase">
    <location>
        <begin position="32"/>
        <end position="409"/>
    </location>
</feature>
<feature type="active site" description="Proton donor" evidence="1">
    <location>
        <position position="95"/>
    </location>
</feature>
<feature type="active site" description="Nucleophile" evidence="3">
    <location>
        <position position="156"/>
    </location>
</feature>
<gene>
    <name type="primary">bgc</name>
</gene>
<keyword id="KW-0326">Glycosidase</keyword>
<keyword id="KW-0378">Hydrolase</keyword>
<keyword id="KW-0732">Signal</keyword>
<protein>
    <recommendedName>
        <fullName>Beta-glucanase</fullName>
        <ecNumber>3.2.1.73</ecNumber>
    </recommendedName>
    <alternativeName>
        <fullName>Endo-beta-1,3-1,4 glucanase</fullName>
    </alternativeName>
</protein>
<reference key="1">
    <citation type="journal article" date="1990" name="Nucleic Acids Res.">
        <title>Nucleotide sequence of a 1,3-1,4-beta-glucanase-encoding gene in Bacillus circulans WL-12.</title>
        <authorList>
            <person name="Bueno A."/>
            <person name="Vasquez de Aldana C.R."/>
            <person name="Correa J."/>
            <person name="del Rey F."/>
        </authorList>
    </citation>
    <scope>NUCLEOTIDE SEQUENCE [GENOMIC DNA]</scope>
    <source>
        <strain>WL-12</strain>
    </source>
</reference>
<sequence>MRKNRGFSFSSKAVMMCCLAFLLIPASFAFAAPNKPFPQHTTYTSGSIKPNHVTQSAMDSSVKAKWDSWKSAYLKTAGTGKYYVKYQSNGDTVSEAHGYGMLATVIMAGYDGNAQTYFDGLYQYYKAHPSANNSKLMAWKQNSSFQNIEGADSATDGDMDIAYSLLLADKQWGSSGSINYLQAGKDIINAIMQSDVNQSQWTLRLGDWATDNTFKNATRPSDFMLNHLKAFQAATGDARWANVIDKTYTIINSLYSGYSSSTGLLPDFVVLSGSTYKPASADFLEGANDGSYDYNSCRTPWRIATDYLMTGDSRALNQLNQMNSWISAKVSGNPSNVKDGYKLNGTVTGSGGSGAFYAPFGVSAMTSSVNQNWLNSVWTKTAGSSNEGYYEDSIKLFSMIVMSGNWWTY</sequence>
<organism>
    <name type="scientific">Niallia circulans</name>
    <name type="common">Bacillus circulans</name>
    <dbReference type="NCBI Taxonomy" id="1397"/>
    <lineage>
        <taxon>Bacteria</taxon>
        <taxon>Bacillati</taxon>
        <taxon>Bacillota</taxon>
        <taxon>Bacilli</taxon>
        <taxon>Bacillales</taxon>
        <taxon>Bacillaceae</taxon>
        <taxon>Niallia</taxon>
    </lineage>
</organism>
<evidence type="ECO:0000250" key="1"/>
<evidence type="ECO:0000255" key="2"/>
<evidence type="ECO:0000255" key="3">
    <source>
        <dbReference type="PROSITE-ProRule" id="PRU10058"/>
    </source>
</evidence>
<evidence type="ECO:0000305" key="4"/>
<comment type="catalytic activity">
    <reaction>
        <text>Hydrolysis of (1-&gt;4)-beta-D-glucosidic linkages in beta-D-glucans containing (1-&gt;3)- and (1-&gt;4)-bonds.</text>
        <dbReference type="EC" id="3.2.1.73"/>
    </reaction>
</comment>
<comment type="similarity">
    <text evidence="4">Belongs to the glycosyl hydrolase 8 (cellulase D) family.</text>
</comment>
<dbReference type="EC" id="3.2.1.73"/>
<dbReference type="EMBL" id="X52880">
    <property type="protein sequence ID" value="CAA37062.1"/>
    <property type="molecule type" value="Genomic_DNA"/>
</dbReference>
<dbReference type="PIR" id="S10485">
    <property type="entry name" value="S10485"/>
</dbReference>
<dbReference type="SMR" id="P19254"/>
<dbReference type="CAZy" id="GH8">
    <property type="family name" value="Glycoside Hydrolase Family 8"/>
</dbReference>
<dbReference type="BRENDA" id="3.2.1.73">
    <property type="organism ID" value="649"/>
</dbReference>
<dbReference type="GO" id="GO:0042972">
    <property type="term" value="F:licheninase activity"/>
    <property type="evidence" value="ECO:0007669"/>
    <property type="project" value="UniProtKB-EC"/>
</dbReference>
<dbReference type="GO" id="GO:0005975">
    <property type="term" value="P:carbohydrate metabolic process"/>
    <property type="evidence" value="ECO:0007669"/>
    <property type="project" value="InterPro"/>
</dbReference>
<dbReference type="Gene3D" id="1.50.10.10">
    <property type="match status" value="1"/>
</dbReference>
<dbReference type="InterPro" id="IPR008928">
    <property type="entry name" value="6-hairpin_glycosidase_sf"/>
</dbReference>
<dbReference type="InterPro" id="IPR012341">
    <property type="entry name" value="6hp_glycosidase-like_sf"/>
</dbReference>
<dbReference type="InterPro" id="IPR002037">
    <property type="entry name" value="Glyco_hydro_8"/>
</dbReference>
<dbReference type="InterPro" id="IPR019834">
    <property type="entry name" value="Glyco_hydro_8_CS"/>
</dbReference>
<dbReference type="Pfam" id="PF01270">
    <property type="entry name" value="Glyco_hydro_8"/>
    <property type="match status" value="1"/>
</dbReference>
<dbReference type="PRINTS" id="PR00735">
    <property type="entry name" value="GLHYDRLASE8"/>
</dbReference>
<dbReference type="SUPFAM" id="SSF48208">
    <property type="entry name" value="Six-hairpin glycosidases"/>
    <property type="match status" value="1"/>
</dbReference>
<dbReference type="PROSITE" id="PS00812">
    <property type="entry name" value="GLYCOSYL_HYDROL_F8"/>
    <property type="match status" value="1"/>
</dbReference>
<proteinExistence type="inferred from homology"/>